<dbReference type="EMBL" id="CP000828">
    <property type="protein sequence ID" value="ABW26036.1"/>
    <property type="molecule type" value="Genomic_DNA"/>
</dbReference>
<dbReference type="EMBL" id="AB120712">
    <property type="protein sequence ID" value="BAD21215.1"/>
    <property type="molecule type" value="Genomic_DNA"/>
</dbReference>
<dbReference type="RefSeq" id="WP_012161597.1">
    <property type="nucleotide sequence ID" value="NC_009925.1"/>
</dbReference>
<dbReference type="SMR" id="Q6L8L3"/>
<dbReference type="STRING" id="329726.AM1_0994"/>
<dbReference type="KEGG" id="amr:AM1_0994"/>
<dbReference type="eggNOG" id="ENOG502Z8HQ">
    <property type="taxonomic scope" value="Bacteria"/>
</dbReference>
<dbReference type="HOGENOM" id="CLU_911234_0_0_3"/>
<dbReference type="OrthoDB" id="513549at2"/>
<dbReference type="Proteomes" id="UP000000268">
    <property type="component" value="Chromosome"/>
</dbReference>
<dbReference type="GO" id="GO:0007623">
    <property type="term" value="P:circadian rhythm"/>
    <property type="evidence" value="ECO:0007669"/>
    <property type="project" value="InterPro"/>
</dbReference>
<dbReference type="Gene3D" id="3.40.50.2300">
    <property type="match status" value="1"/>
</dbReference>
<dbReference type="Gene3D" id="1.10.1240.30">
    <property type="entry name" value="KaiA/RbsU domain"/>
    <property type="match status" value="1"/>
</dbReference>
<dbReference type="InterPro" id="IPR011006">
    <property type="entry name" value="CheY-like_superfamily"/>
</dbReference>
<dbReference type="InterPro" id="IPR011648">
    <property type="entry name" value="Circadian_clock_KaiA"/>
</dbReference>
<dbReference type="InterPro" id="IPR020844">
    <property type="entry name" value="Circadian_clock_KaiA_N"/>
</dbReference>
<dbReference type="InterPro" id="IPR020856">
    <property type="entry name" value="Circadian_clock_protein_KaiA_C"/>
</dbReference>
<dbReference type="InterPro" id="IPR017944">
    <property type="entry name" value="KaiA/RbsU_helical_domain_sf"/>
</dbReference>
<dbReference type="Pfam" id="PF07688">
    <property type="entry name" value="KaiA"/>
    <property type="match status" value="1"/>
</dbReference>
<dbReference type="Pfam" id="PF21714">
    <property type="entry name" value="KaiA_N"/>
    <property type="match status" value="1"/>
</dbReference>
<dbReference type="SMART" id="SM01247">
    <property type="entry name" value="KaiA"/>
    <property type="match status" value="1"/>
</dbReference>
<dbReference type="SUPFAM" id="SSF52172">
    <property type="entry name" value="CheY-like"/>
    <property type="match status" value="1"/>
</dbReference>
<dbReference type="SUPFAM" id="SSF101215">
    <property type="entry name" value="KaiA/RbsU domain"/>
    <property type="match status" value="1"/>
</dbReference>
<dbReference type="PROSITE" id="PS51431">
    <property type="entry name" value="KAIA_C"/>
    <property type="match status" value="1"/>
</dbReference>
<dbReference type="PROSITE" id="PS51430">
    <property type="entry name" value="KAIA_N"/>
    <property type="match status" value="1"/>
</dbReference>
<organism>
    <name type="scientific">Acaryochloris marina (strain MBIC 11017)</name>
    <dbReference type="NCBI Taxonomy" id="329726"/>
    <lineage>
        <taxon>Bacteria</taxon>
        <taxon>Bacillati</taxon>
        <taxon>Cyanobacteriota</taxon>
        <taxon>Cyanophyceae</taxon>
        <taxon>Acaryochloridales</taxon>
        <taxon>Acaryochloridaceae</taxon>
        <taxon>Acaryochloris</taxon>
    </lineage>
</organism>
<sequence>MTLSQTAVSRPQIFICTLLSSESLVDLYTQILEGDRYSLVHATYDNFLEIVEQGKHRIDCLIFEKNAALPKVVSHLHREAILLPAVLLQVEESVEKTSQPNSADRDPQQDSYYHIAEVIVDHDQEDILSSIDCAIAQFLQLSKACRLPTRLQKKYADEAIQDNLATQQQRLSQKLKERLGYLGVYYKRNPQQFFHKLTEEEQTDYLVTLKRDYRDIILNYFRQDSSVNQEIDDFVTQIFFADISILKILEIHMELMDAFAKKLKLEGRNEDILLDYRLTLIDIMAHLCEMYRRSIPKTR</sequence>
<reference key="1">
    <citation type="journal article" date="2008" name="Proc. Natl. Acad. Sci. U.S.A.">
        <title>Niche adaptation and genome expansion in the chlorophyll d-producing cyanobacterium Acaryochloris marina.</title>
        <authorList>
            <person name="Swingley W.D."/>
            <person name="Chen M."/>
            <person name="Cheung P.C."/>
            <person name="Conrad A.L."/>
            <person name="Dejesa L.C."/>
            <person name="Hao J."/>
            <person name="Honchak B.M."/>
            <person name="Karbach L.E."/>
            <person name="Kurdoglu A."/>
            <person name="Lahiri S."/>
            <person name="Mastrian S.D."/>
            <person name="Miyashita H."/>
            <person name="Page L."/>
            <person name="Ramakrishna P."/>
            <person name="Satoh S."/>
            <person name="Sattley W.M."/>
            <person name="Shimada Y."/>
            <person name="Taylor H.L."/>
            <person name="Tomo T."/>
            <person name="Tsuchiya T."/>
            <person name="Wang Z.T."/>
            <person name="Raymond J."/>
            <person name="Mimuro M."/>
            <person name="Blankenship R.E."/>
            <person name="Touchman J.W."/>
        </authorList>
    </citation>
    <scope>NUCLEOTIDE SEQUENCE [LARGE SCALE GENOMIC DNA]</scope>
    <source>
        <strain>MBIC 11017</strain>
    </source>
</reference>
<reference key="2">
    <citation type="journal article" date="2004" name="Nat. Struct. Mol. Biol.">
        <title>Crystal structure of the C-terminal clock-oscillator domain of the cyanobacterial KaiA protein.</title>
        <authorList>
            <person name="Uzumaki T."/>
            <person name="Fujita M."/>
            <person name="Nakatsu T."/>
            <person name="Hayashi F."/>
            <person name="Shibata H."/>
            <person name="Itoh N."/>
            <person name="Kato H."/>
            <person name="Ishiura M."/>
        </authorList>
    </citation>
    <scope>NUCLEOTIDE SEQUENCE [GENOMIC DNA] OF 85-298</scope>
    <source>
        <strain>MBIC 11017</strain>
    </source>
</reference>
<proteinExistence type="inferred from homology"/>
<keyword id="KW-0090">Biological rhythms</keyword>
<keyword id="KW-1185">Reference proteome</keyword>
<comment type="function">
    <text evidence="1">Key component of the KaiABC oscillator complex, which constitutes the main circadian regulator in cyanobacteria. Complex composition changes during the circadian cycle to control KaiC phosphorylation. KaiA stimulates KaiC autophosphorylation, while KaiB sequesters KaiA, leading to KaiC autodephosphorylation. KaiA binding to the KaiC CII domain during the subjective day yields KaiA(2-4):KaiC(6) complexes which stimulate KaiC autophosphorylation. Phospho-Ser-431 KaiC accumulation triggers binding of KaiB during the subjective night to form the KaiB(6):KaiC(6) complex, leading to changes in the output regulators CikA and SasA. KaiB(6):KaiC(6) formation exposes a site for KaiA binding on KaiB that sequesters KaiA from KaiC's CII domain, making the KaiC(6):KaiB(6):KaiA(12) complex resulting in KaiC autodephosphorylation. Complete dephosphorylation of KaiC leads to dissociation of KaiA(2):KaiB(1), completing 1 cycle of the Kai oscillator.</text>
</comment>
<comment type="function">
    <text evidence="1">Binds oxidized quinones via the N-terminal PsR domain, allowing it to sense redox changes and possibly mediate clock input.</text>
</comment>
<comment type="subunit">
    <text evidence="1">Homodimer. The KaiABC complex composition changes during the circadian cycle to control KaiC phosphorylation. Complexes KaiC(6), KaiA(2-4):KaiC(6), KaiB(6):KaiC(6) and KaiC(6):KaiB(6):KaiA(12) are among the most important forms, many form cooperatively. KaiA and CikA bind to the same region of the KaiB(fs) form and therefore compete.</text>
</comment>
<comment type="domain">
    <text evidence="1 2">The N-terminal pseudoreceiver domain (PsR, approximately equal to KaiA N-terminal) binds oxidized quinones (By similarity). The KaiA C-terminal domain mediates interaction with KaiC, homodimerization, and is responsible for the clock oscillation function (By similarity).</text>
</comment>
<feature type="chain" id="PRO_0000217867" description="Circadian clock oscillator protein KaiA">
    <location>
        <begin position="1"/>
        <end position="299"/>
    </location>
</feature>
<feature type="domain" description="KaiA N-terminal" evidence="3">
    <location>
        <begin position="9"/>
        <end position="179"/>
    </location>
</feature>
<feature type="domain" description="KaiA C-terminal" evidence="4">
    <location>
        <begin position="189"/>
        <end position="297"/>
    </location>
</feature>
<feature type="region of interest" description="PsR domain, binds oxidized quinones" evidence="1">
    <location>
        <begin position="9"/>
        <end position="148"/>
    </location>
</feature>
<feature type="region of interest" description="Flexible linker" evidence="1">
    <location>
        <begin position="180"/>
        <end position="188"/>
    </location>
</feature>
<protein>
    <recommendedName>
        <fullName evidence="5">Circadian clock oscillator protein KaiA</fullName>
    </recommendedName>
</protein>
<gene>
    <name evidence="5" type="primary">kaiA</name>
    <name type="ordered locus">AM1_0994</name>
</gene>
<evidence type="ECO:0000250" key="1">
    <source>
        <dbReference type="UniProtKB" id="Q79PF6"/>
    </source>
</evidence>
<evidence type="ECO:0000250" key="2">
    <source>
        <dbReference type="UniProtKB" id="Q79V62"/>
    </source>
</evidence>
<evidence type="ECO:0000255" key="3">
    <source>
        <dbReference type="PROSITE-ProRule" id="PRU00760"/>
    </source>
</evidence>
<evidence type="ECO:0000255" key="4">
    <source>
        <dbReference type="PROSITE-ProRule" id="PRU00761"/>
    </source>
</evidence>
<evidence type="ECO:0000303" key="5">
    <source>
    </source>
</evidence>
<accession>Q6L8L3</accession>
<accession>B0C0R2</accession>
<name>KAIA_ACAM1</name>